<proteinExistence type="inferred from homology"/>
<organism>
    <name type="scientific">Shigella boydii serotype 18 (strain CDC 3083-94 / BS512)</name>
    <dbReference type="NCBI Taxonomy" id="344609"/>
    <lineage>
        <taxon>Bacteria</taxon>
        <taxon>Pseudomonadati</taxon>
        <taxon>Pseudomonadota</taxon>
        <taxon>Gammaproteobacteria</taxon>
        <taxon>Enterobacterales</taxon>
        <taxon>Enterobacteriaceae</taxon>
        <taxon>Shigella</taxon>
    </lineage>
</organism>
<sequence>MTAIAPVITIDGPSGAGKGTLCKAMAEALQWHLLDSGAIYRVLALAALHHHVDVASEDALVPLASHLDVRFVSTNGNLEVILEGEDVSGEIRTQEVANAASQVAAFPRVREALLRRQRAFRELPGLIADGRDMGTVVFPDAPVKIFLDASSEERAHRRMLQLQEKGFSVNFERLLAEIKERDDRDRNRAVAPLVPAADALVLDSTTLSIEQVIEKALQYARQKLALA</sequence>
<dbReference type="EC" id="2.7.4.25" evidence="1"/>
<dbReference type="EMBL" id="CP001063">
    <property type="protein sequence ID" value="ACD08923.1"/>
    <property type="molecule type" value="Genomic_DNA"/>
</dbReference>
<dbReference type="RefSeq" id="WP_000125016.1">
    <property type="nucleotide sequence ID" value="NC_010658.1"/>
</dbReference>
<dbReference type="SMR" id="B2TUH1"/>
<dbReference type="STRING" id="344609.SbBS512_E2418"/>
<dbReference type="GeneID" id="93776507"/>
<dbReference type="KEGG" id="sbc:SbBS512_E2418"/>
<dbReference type="HOGENOM" id="CLU_079959_0_2_6"/>
<dbReference type="Proteomes" id="UP000001030">
    <property type="component" value="Chromosome"/>
</dbReference>
<dbReference type="GO" id="GO:0005829">
    <property type="term" value="C:cytosol"/>
    <property type="evidence" value="ECO:0007669"/>
    <property type="project" value="TreeGrafter"/>
</dbReference>
<dbReference type="GO" id="GO:0005524">
    <property type="term" value="F:ATP binding"/>
    <property type="evidence" value="ECO:0007669"/>
    <property type="project" value="UniProtKB-UniRule"/>
</dbReference>
<dbReference type="GO" id="GO:0036430">
    <property type="term" value="F:CMP kinase activity"/>
    <property type="evidence" value="ECO:0007669"/>
    <property type="project" value="RHEA"/>
</dbReference>
<dbReference type="GO" id="GO:0036431">
    <property type="term" value="F:dCMP kinase activity"/>
    <property type="evidence" value="ECO:0007669"/>
    <property type="project" value="RHEA"/>
</dbReference>
<dbReference type="GO" id="GO:0015949">
    <property type="term" value="P:nucleobase-containing small molecule interconversion"/>
    <property type="evidence" value="ECO:0007669"/>
    <property type="project" value="TreeGrafter"/>
</dbReference>
<dbReference type="GO" id="GO:0006220">
    <property type="term" value="P:pyrimidine nucleotide metabolic process"/>
    <property type="evidence" value="ECO:0007669"/>
    <property type="project" value="UniProtKB-UniRule"/>
</dbReference>
<dbReference type="CDD" id="cd02020">
    <property type="entry name" value="CMPK"/>
    <property type="match status" value="1"/>
</dbReference>
<dbReference type="FunFam" id="3.40.50.300:FF:000262">
    <property type="entry name" value="Cytidylate kinase"/>
    <property type="match status" value="1"/>
</dbReference>
<dbReference type="Gene3D" id="3.40.50.300">
    <property type="entry name" value="P-loop containing nucleotide triphosphate hydrolases"/>
    <property type="match status" value="1"/>
</dbReference>
<dbReference type="HAMAP" id="MF_00238">
    <property type="entry name" value="Cytidyl_kinase_type1"/>
    <property type="match status" value="1"/>
</dbReference>
<dbReference type="InterPro" id="IPR003136">
    <property type="entry name" value="Cytidylate_kin"/>
</dbReference>
<dbReference type="InterPro" id="IPR011994">
    <property type="entry name" value="Cytidylate_kinase_dom"/>
</dbReference>
<dbReference type="InterPro" id="IPR027417">
    <property type="entry name" value="P-loop_NTPase"/>
</dbReference>
<dbReference type="NCBIfam" id="TIGR00017">
    <property type="entry name" value="cmk"/>
    <property type="match status" value="1"/>
</dbReference>
<dbReference type="PANTHER" id="PTHR21299:SF2">
    <property type="entry name" value="CYTIDYLATE KINASE"/>
    <property type="match status" value="1"/>
</dbReference>
<dbReference type="PANTHER" id="PTHR21299">
    <property type="entry name" value="CYTIDYLATE KINASE/PANTOATE-BETA-ALANINE LIGASE"/>
    <property type="match status" value="1"/>
</dbReference>
<dbReference type="Pfam" id="PF02224">
    <property type="entry name" value="Cytidylate_kin"/>
    <property type="match status" value="1"/>
</dbReference>
<dbReference type="SUPFAM" id="SSF52540">
    <property type="entry name" value="P-loop containing nucleoside triphosphate hydrolases"/>
    <property type="match status" value="1"/>
</dbReference>
<gene>
    <name evidence="1" type="primary">cmk</name>
    <name type="ordered locus">SbBS512_E2418</name>
</gene>
<reference key="1">
    <citation type="submission" date="2008-05" db="EMBL/GenBank/DDBJ databases">
        <title>Complete sequence of Shigella boydii serotype 18 strain BS512.</title>
        <authorList>
            <person name="Rasko D.A."/>
            <person name="Rosovitz M."/>
            <person name="Maurelli A.T."/>
            <person name="Myers G."/>
            <person name="Seshadri R."/>
            <person name="Cer R."/>
            <person name="Jiang L."/>
            <person name="Ravel J."/>
            <person name="Sebastian Y."/>
        </authorList>
    </citation>
    <scope>NUCLEOTIDE SEQUENCE [LARGE SCALE GENOMIC DNA]</scope>
    <source>
        <strain>CDC 3083-94 / BS512</strain>
    </source>
</reference>
<keyword id="KW-0067">ATP-binding</keyword>
<keyword id="KW-0963">Cytoplasm</keyword>
<keyword id="KW-0418">Kinase</keyword>
<keyword id="KW-0547">Nucleotide-binding</keyword>
<keyword id="KW-1185">Reference proteome</keyword>
<keyword id="KW-0808">Transferase</keyword>
<name>KCY_SHIB3</name>
<feature type="chain" id="PRO_1000100688" description="Cytidylate kinase">
    <location>
        <begin position="1"/>
        <end position="227"/>
    </location>
</feature>
<feature type="binding site" evidence="1">
    <location>
        <begin position="12"/>
        <end position="20"/>
    </location>
    <ligand>
        <name>ATP</name>
        <dbReference type="ChEBI" id="CHEBI:30616"/>
    </ligand>
</feature>
<evidence type="ECO:0000255" key="1">
    <source>
        <dbReference type="HAMAP-Rule" id="MF_00238"/>
    </source>
</evidence>
<comment type="catalytic activity">
    <reaction evidence="1">
        <text>CMP + ATP = CDP + ADP</text>
        <dbReference type="Rhea" id="RHEA:11600"/>
        <dbReference type="ChEBI" id="CHEBI:30616"/>
        <dbReference type="ChEBI" id="CHEBI:58069"/>
        <dbReference type="ChEBI" id="CHEBI:60377"/>
        <dbReference type="ChEBI" id="CHEBI:456216"/>
        <dbReference type="EC" id="2.7.4.25"/>
    </reaction>
</comment>
<comment type="catalytic activity">
    <reaction evidence="1">
        <text>dCMP + ATP = dCDP + ADP</text>
        <dbReference type="Rhea" id="RHEA:25094"/>
        <dbReference type="ChEBI" id="CHEBI:30616"/>
        <dbReference type="ChEBI" id="CHEBI:57566"/>
        <dbReference type="ChEBI" id="CHEBI:58593"/>
        <dbReference type="ChEBI" id="CHEBI:456216"/>
        <dbReference type="EC" id="2.7.4.25"/>
    </reaction>
</comment>
<comment type="subcellular location">
    <subcellularLocation>
        <location evidence="1">Cytoplasm</location>
    </subcellularLocation>
</comment>
<comment type="similarity">
    <text evidence="1">Belongs to the cytidylate kinase family. Type 1 subfamily.</text>
</comment>
<accession>B2TUH1</accession>
<protein>
    <recommendedName>
        <fullName evidence="1">Cytidylate kinase</fullName>
        <shortName evidence="1">CK</shortName>
        <ecNumber evidence="1">2.7.4.25</ecNumber>
    </recommendedName>
    <alternativeName>
        <fullName evidence="1">Cytidine monophosphate kinase</fullName>
        <shortName evidence="1">CMP kinase</shortName>
    </alternativeName>
</protein>